<organism>
    <name type="scientific">Pseudomonas savastanoi pv. phaseolicola</name>
    <name type="common">Pseudomonas syringae pv. phaseolicola</name>
    <dbReference type="NCBI Taxonomy" id="319"/>
    <lineage>
        <taxon>Bacteria</taxon>
        <taxon>Pseudomonadati</taxon>
        <taxon>Pseudomonadota</taxon>
        <taxon>Gammaproteobacteria</taxon>
        <taxon>Pseudomonadales</taxon>
        <taxon>Pseudomonadaceae</taxon>
        <taxon>Pseudomonas</taxon>
    </lineage>
</organism>
<proteinExistence type="evidence at transcript level"/>
<reference key="1">
    <citation type="journal article" date="1999" name="Proc. Natl. Acad. Sci. U.S.A.">
        <title>Identification of a pathogenicity island, which contains genes for virulence and avirulence, on a large native plasmid in the bean pathogen Pseudomonas syringae pathovar phaseolicola.</title>
        <authorList>
            <person name="Jackson R.W."/>
            <person name="Athanassopoulos E."/>
            <person name="Tsiamis G."/>
            <person name="Mansfield J.W."/>
            <person name="Sesma A."/>
            <person name="Arnold D.L."/>
            <person name="Gibbon M.J."/>
            <person name="Murillo J."/>
            <person name="Taylor J.D."/>
            <person name="Vivian A."/>
        </authorList>
    </citation>
    <scope>NUCLEOTIDE SEQUENCE [GENOMIC DNA]</scope>
    <scope>FUNCTION</scope>
    <source>
        <strain>1449B / Race 7</strain>
        <plasmid>pAV511</plasmid>
    </source>
</reference>
<reference key="2">
    <citation type="submission" date="2004-04" db="EMBL/GenBank/DDBJ databases">
        <authorList>
            <person name="Tsiamis G."/>
            <person name="Mansfield J.W."/>
        </authorList>
    </citation>
    <scope>NUCLEOTIDE SEQUENCE [GENOMIC DNA]</scope>
    <source>
        <strain>1449B / Race 7</strain>
        <plasmid>pAV520</plasmid>
    </source>
</reference>
<reference key="3">
    <citation type="journal article" date="2002" name="Mol. Plant Pathol.">
        <title>Location and activity of members of a family of virPphA homologues in pathovars of Pseudomonas syringae and P.savastanoi.</title>
        <authorList>
            <person name="Jackson R.W."/>
            <person name="Mansfield J.W."/>
            <person name="Ammouneh H."/>
            <person name="Dutton L.C."/>
            <person name="Wharton B."/>
            <person name="Ortiz-Barredo A."/>
            <person name="Arnold D.L."/>
            <person name="Tsiamis G."/>
            <person name="Sesma A."/>
            <person name="Butcher D."/>
            <person name="Boch J."/>
            <person name="Kim Y.J."/>
            <person name="Martin G.B."/>
            <person name="Tegli S."/>
            <person name="Murillo J."/>
            <person name="Vivian A."/>
        </authorList>
        <dbReference type="AGRICOLA" id="IND23295115"/>
    </citation>
    <scope>FUNCTION</scope>
    <source>
        <strain>1449B / Race 7</strain>
        <plasmid>pAV520</plasmid>
    </source>
</reference>
<reference key="4">
    <citation type="journal article" date="2004" name="Mol. Plant Microbe Interact.">
        <title>Transcriptional regulation of components of the type III secretion system and effectors in Pseudomonas syringae pv. phaseolicola.</title>
        <authorList>
            <person name="Thwaites R."/>
            <person name="Spanu P.D."/>
            <person name="Panopoulos N.J."/>
            <person name="Stevens C."/>
            <person name="Mansfield J.W."/>
        </authorList>
    </citation>
    <scope>SUBCELLULAR LOCATION</scope>
    <scope>INDUCTION BY HRPL</scope>
    <source>
        <strain>1449B / Race 7</strain>
    </source>
</reference>
<accession>Q9RBW3</accession>
<dbReference type="EMBL" id="AF141883">
    <property type="protein sequence ID" value="AAD47203.1"/>
    <property type="molecule type" value="Genomic_DNA"/>
</dbReference>
<dbReference type="EMBL" id="AY603426">
    <property type="protein sequence ID" value="AAV68746.1"/>
    <property type="molecule type" value="Genomic_DNA"/>
</dbReference>
<dbReference type="RefSeq" id="WP_011282445.1">
    <property type="nucleotide sequence ID" value="NZ_CP166926.2"/>
</dbReference>
<dbReference type="BMRB" id="Q9RBW3"/>
<dbReference type="SMR" id="Q9RBW3"/>
<dbReference type="DIP" id="DIP-61109N"/>
<dbReference type="IntAct" id="Q9RBW3">
    <property type="interactions" value="1"/>
</dbReference>
<dbReference type="OMA" id="HFPNMPM"/>
<dbReference type="PHI-base" id="PHI:989"/>
<dbReference type="GO" id="GO:0005576">
    <property type="term" value="C:extracellular region"/>
    <property type="evidence" value="ECO:0007669"/>
    <property type="project" value="UniProtKB-SubCell"/>
</dbReference>
<dbReference type="GO" id="GO:0052040">
    <property type="term" value="P:symbiont-mediated perturbation of host programmed cell death"/>
    <property type="evidence" value="ECO:0007669"/>
    <property type="project" value="UniProtKB-KW"/>
</dbReference>
<dbReference type="CDD" id="cd12803">
    <property type="entry name" value="HopAB_BID"/>
    <property type="match status" value="1"/>
</dbReference>
<dbReference type="CDD" id="cd12802">
    <property type="entry name" value="HopAB_PID"/>
    <property type="match status" value="1"/>
</dbReference>
<dbReference type="Gene3D" id="1.20.1280.110">
    <property type="match status" value="1"/>
</dbReference>
<dbReference type="Gene3D" id="3.30.40.110">
    <property type="entry name" value="AvrPtoB, C-terminal domain"/>
    <property type="match status" value="1"/>
</dbReference>
<dbReference type="Gene3D" id="1.20.1280.220">
    <property type="entry name" value="Effector protein HopAB, BAK1-interacting domain"/>
    <property type="match status" value="1"/>
</dbReference>
<dbReference type="InterPro" id="IPR015133">
    <property type="entry name" value="E3_ubiquit_lig_AvrPtoB"/>
</dbReference>
<dbReference type="InterPro" id="IPR031759">
    <property type="entry name" value="HopAB_BAK-bd"/>
</dbReference>
<dbReference type="InterPro" id="IPR038342">
    <property type="entry name" value="HopAB_BAK-bd_sf"/>
</dbReference>
<dbReference type="InterPro" id="IPR038448">
    <property type="entry name" value="HopAB_E3_ubiquit_lig_sf"/>
</dbReference>
<dbReference type="InterPro" id="IPR033743">
    <property type="entry name" value="HopAB_PID"/>
</dbReference>
<dbReference type="Pfam" id="PF09046">
    <property type="entry name" value="AvrPtoB-E3_ubiq"/>
    <property type="match status" value="1"/>
</dbReference>
<dbReference type="Pfam" id="PF16847">
    <property type="entry name" value="AvrPtoB_bdg"/>
    <property type="match status" value="1"/>
</dbReference>
<keyword id="KW-0928">Hypersensitive response elicitation</keyword>
<keyword id="KW-0614">Plasmid</keyword>
<keyword id="KW-0964">Secreted</keyword>
<keyword id="KW-0843">Virulence</keyword>
<name>HPAB1_PSESH</name>
<feature type="chain" id="PRO_0000236789" description="Effector protein hopAB1">
    <location>
        <begin position="1"/>
        <end position="539"/>
    </location>
</feature>
<feature type="region of interest" description="Disordered" evidence="1">
    <location>
        <begin position="1"/>
        <end position="93"/>
    </location>
</feature>
<feature type="region of interest" description="Disordered" evidence="1">
    <location>
        <begin position="163"/>
        <end position="220"/>
    </location>
</feature>
<feature type="region of interest" description="Disordered" evidence="1">
    <location>
        <begin position="230"/>
        <end position="249"/>
    </location>
</feature>
<feature type="region of interest" description="Disordered" evidence="1">
    <location>
        <begin position="315"/>
        <end position="336"/>
    </location>
</feature>
<feature type="compositionally biased region" description="Basic and acidic residues" evidence="1">
    <location>
        <begin position="18"/>
        <end position="31"/>
    </location>
</feature>
<feature type="compositionally biased region" description="Low complexity" evidence="1">
    <location>
        <begin position="181"/>
        <end position="194"/>
    </location>
</feature>
<gene>
    <name type="primary">hopAB1</name>
    <name type="synonym">virPphA</name>
</gene>
<evidence type="ECO:0000256" key="1">
    <source>
        <dbReference type="SAM" id="MobiDB-lite"/>
    </source>
</evidence>
<evidence type="ECO:0000269" key="2">
    <source>
    </source>
</evidence>
<evidence type="ECO:0000269" key="3">
    <source>
    </source>
</evidence>
<evidence type="ECO:0000269" key="4">
    <source ref="3"/>
</evidence>
<evidence type="ECO:0000305" key="5"/>
<comment type="function">
    <text evidence="2 4">Effector protein that plays different roles depending on the species and plant cultivars that interact with the pathogen. Acts as a virulence determinant by enhancing the development of disease symptoms and bacterial growth. Acts as an avirulence factor by eliciting hypersensitive response (HR) and plant resistance.</text>
</comment>
<comment type="subcellular location">
    <subcellularLocation>
        <location evidence="3">Secreted</location>
    </subcellularLocation>
    <text>Secreted via type III secretion system (T3SS).</text>
</comment>
<comment type="induction">
    <text evidence="3">Transcriptionally induced by HrpL.</text>
</comment>
<comment type="similarity">
    <text evidence="5">Belongs to the HopAB family.</text>
</comment>
<protein>
    <recommendedName>
        <fullName>Effector protein hopAB1</fullName>
    </recommendedName>
    <alternativeName>
        <fullName>Protein virPphA</fullName>
    </alternativeName>
</protein>
<geneLocation type="plasmid">
    <name>pAV511</name>
</geneLocation>
<geneLocation type="plasmid">
    <name>pAV520</name>
</geneLocation>
<sequence>MPGINGAGPSNFFWQWRTDGEPVTEREHDSSRSASSANSPELPPPASPAESGRQRLLRSSALSRQTREWLEATPARVQGATPPAEARQSPEAQQAERIVQELVRGGADLNNVRTMLRNVMDNNAVAFSRVERDILLQHFPNMPMTGISSDSVLANELRQRLRQTVRQQRIQSSTPARLADSSSGSSQRSLIGRSTMLMTPGRSSSSSAAASRTSVDRHPQGLDLESARLASAARHNHSANQTNEALRRLTQEGVDMERLRTSLGRYIMSLEPLPPDLRRALESVGINPFIPEELSLVDHPVLNFSAALNRMLASRQTTTNSPELPPLASSAESGRRRLLRSPPLLSGQREWIEQSMRQEAEPQSSRLNRAVRLAVMPPQNENEDNVAYAIRLRRLNPGADVSRVVASFITDPAARQQVVNDIRAALDIAPQFSQLRTISKADAESEELGFRDAADHPDNATSCLFGEELSLSNPDQQVIGLAVNPTDKPQPYSQEVNKALTFMDMKKLAQYLADKPEHPLNRQRLDAKNIAKYAFKIVP</sequence>